<evidence type="ECO:0000250" key="1">
    <source>
        <dbReference type="UniProtKB" id="Q16595"/>
    </source>
</evidence>
<evidence type="ECO:0000255" key="2"/>
<evidence type="ECO:0000269" key="3">
    <source>
    </source>
</evidence>
<evidence type="ECO:0000303" key="4">
    <source>
    </source>
</evidence>
<evidence type="ECO:0000305" key="5"/>
<evidence type="ECO:0000312" key="6">
    <source>
        <dbReference type="EMBL" id="BAM28645.1"/>
    </source>
</evidence>
<evidence type="ECO:0000312" key="7">
    <source>
        <dbReference type="EMBL" id="CAC5430685.1"/>
    </source>
</evidence>
<evidence type="ECO:0000312" key="8">
    <source>
        <dbReference type="EMBL" id="CBZ34739.1"/>
    </source>
</evidence>
<evidence type="ECO:0000312" key="9">
    <source>
        <dbReference type="Proteomes" id="UP000008980"/>
    </source>
</evidence>
<evidence type="ECO:0000312" key="10">
    <source>
        <dbReference type="Proteomes" id="UP000274082"/>
    </source>
</evidence>
<evidence type="ECO:0000312" key="11">
    <source>
        <dbReference type="Proteomes" id="UP000318447"/>
    </source>
</evidence>
<feature type="transit peptide" description="Mitochondrion" evidence="2">
    <location>
        <begin position="1"/>
        <end position="50"/>
    </location>
</feature>
<feature type="chain" id="PRO_0000458015" description="Frataxin-like protein, mitochondrial" evidence="2">
    <location>
        <begin position="51"/>
        <end position="189"/>
    </location>
</feature>
<accession>I7HD01</accession>
<accession>E9BHL3</accession>
<dbReference type="EC" id="1.16.3.1" evidence="1"/>
<dbReference type="EMBL" id="AB678408">
    <property type="protein sequence ID" value="BAM28645.1"/>
    <property type="molecule type" value="mRNA"/>
</dbReference>
<dbReference type="EMBL" id="LR812645">
    <property type="protein sequence ID" value="CAC5430685.1"/>
    <property type="molecule type" value="Genomic_DNA"/>
</dbReference>
<dbReference type="EMBL" id="FR799612">
    <property type="protein sequence ID" value="CBZ34739.1"/>
    <property type="molecule type" value="Genomic_DNA"/>
</dbReference>
<dbReference type="EMBL" id="CP029524">
    <property type="protein sequence ID" value="AYU79442.1"/>
    <property type="molecule type" value="Genomic_DNA"/>
</dbReference>
<dbReference type="EMBL" id="RHLC01000018">
    <property type="protein sequence ID" value="TPP40722.1"/>
    <property type="molecule type" value="Genomic_DNA"/>
</dbReference>
<dbReference type="EMBL" id="RHLD01000022">
    <property type="protein sequence ID" value="TPP48925.1"/>
    <property type="molecule type" value="Genomic_DNA"/>
</dbReference>
<dbReference type="RefSeq" id="XP_003861439.1">
    <property type="nucleotide sequence ID" value="XM_003861391.1"/>
</dbReference>
<dbReference type="SMR" id="I7HD01"/>
<dbReference type="EnsemblProtists" id="CBZ34739">
    <property type="protein sequence ID" value="CBZ34739"/>
    <property type="gene ID" value="LDBPK_251090"/>
</dbReference>
<dbReference type="GeneID" id="13388685"/>
<dbReference type="KEGG" id="ldo:LDBPK_251090"/>
<dbReference type="VEuPathDB" id="TriTrypDB:LdBPK_251090.1"/>
<dbReference type="VEuPathDB" id="TriTrypDB:LdCL_250016300"/>
<dbReference type="VEuPathDB" id="TriTrypDB:LDHU3_25.1410"/>
<dbReference type="OMA" id="ARCESKG"/>
<dbReference type="OrthoDB" id="1897642at2759"/>
<dbReference type="PhylomeDB" id="E9BHL3"/>
<dbReference type="Proteomes" id="UP000008980">
    <property type="component" value="Chromosome 25"/>
</dbReference>
<dbReference type="Proteomes" id="UP000274082">
    <property type="component" value="Chromosome ldcl_25"/>
</dbReference>
<dbReference type="Proteomes" id="UP000318447">
    <property type="component" value="Unassembled WGS sequence"/>
</dbReference>
<dbReference type="Proteomes" id="UP000318821">
    <property type="component" value="Unassembled WGS sequence"/>
</dbReference>
<dbReference type="Proteomes" id="UP000601710">
    <property type="component" value="Chromosome 25"/>
</dbReference>
<dbReference type="GO" id="GO:0005739">
    <property type="term" value="C:mitochondrion"/>
    <property type="evidence" value="ECO:0007669"/>
    <property type="project" value="UniProtKB-SubCell"/>
</dbReference>
<dbReference type="GO" id="GO:0051537">
    <property type="term" value="F:2 iron, 2 sulfur cluster binding"/>
    <property type="evidence" value="ECO:0007669"/>
    <property type="project" value="TreeGrafter"/>
</dbReference>
<dbReference type="GO" id="GO:0008199">
    <property type="term" value="F:ferric iron binding"/>
    <property type="evidence" value="ECO:0007669"/>
    <property type="project" value="InterPro"/>
</dbReference>
<dbReference type="GO" id="GO:0008198">
    <property type="term" value="F:ferrous iron binding"/>
    <property type="evidence" value="ECO:0007669"/>
    <property type="project" value="TreeGrafter"/>
</dbReference>
<dbReference type="GO" id="GO:0004322">
    <property type="term" value="F:ferroxidase activity"/>
    <property type="evidence" value="ECO:0007669"/>
    <property type="project" value="UniProtKB-EC"/>
</dbReference>
<dbReference type="GO" id="GO:0034986">
    <property type="term" value="F:iron chaperone activity"/>
    <property type="evidence" value="ECO:0007669"/>
    <property type="project" value="TreeGrafter"/>
</dbReference>
<dbReference type="GO" id="GO:0006879">
    <property type="term" value="P:intracellular iron ion homeostasis"/>
    <property type="evidence" value="ECO:0007669"/>
    <property type="project" value="UniProtKB-KW"/>
</dbReference>
<dbReference type="GO" id="GO:0006826">
    <property type="term" value="P:iron ion transport"/>
    <property type="evidence" value="ECO:0007669"/>
    <property type="project" value="UniProtKB-KW"/>
</dbReference>
<dbReference type="GO" id="GO:0016226">
    <property type="term" value="P:iron-sulfur cluster assembly"/>
    <property type="evidence" value="ECO:0007669"/>
    <property type="project" value="InterPro"/>
</dbReference>
<dbReference type="FunFam" id="3.30.920.10:FF:000010">
    <property type="entry name" value="Frataxin-like protein"/>
    <property type="match status" value="1"/>
</dbReference>
<dbReference type="Gene3D" id="3.30.920.10">
    <property type="entry name" value="Frataxin/CyaY"/>
    <property type="match status" value="1"/>
</dbReference>
<dbReference type="InterPro" id="IPR017789">
    <property type="entry name" value="Frataxin"/>
</dbReference>
<dbReference type="InterPro" id="IPR002908">
    <property type="entry name" value="Frataxin/CyaY"/>
</dbReference>
<dbReference type="InterPro" id="IPR036524">
    <property type="entry name" value="Frataxin/CyaY_sf"/>
</dbReference>
<dbReference type="InterPro" id="IPR020895">
    <property type="entry name" value="Frataxin_CS"/>
</dbReference>
<dbReference type="NCBIfam" id="TIGR03421">
    <property type="entry name" value="FeS_CyaY"/>
    <property type="match status" value="1"/>
</dbReference>
<dbReference type="NCBIfam" id="TIGR03422">
    <property type="entry name" value="mito_frataxin"/>
    <property type="match status" value="1"/>
</dbReference>
<dbReference type="PANTHER" id="PTHR16821">
    <property type="entry name" value="FRATAXIN"/>
    <property type="match status" value="1"/>
</dbReference>
<dbReference type="PANTHER" id="PTHR16821:SF2">
    <property type="entry name" value="FRATAXIN, MITOCHONDRIAL"/>
    <property type="match status" value="1"/>
</dbReference>
<dbReference type="Pfam" id="PF01491">
    <property type="entry name" value="Frataxin_Cyay"/>
    <property type="match status" value="1"/>
</dbReference>
<dbReference type="SMART" id="SM01219">
    <property type="entry name" value="Frataxin_Cyay"/>
    <property type="match status" value="1"/>
</dbReference>
<dbReference type="SUPFAM" id="SSF55387">
    <property type="entry name" value="Frataxin/Nqo15-like"/>
    <property type="match status" value="1"/>
</dbReference>
<dbReference type="PROSITE" id="PS01344">
    <property type="entry name" value="FRATAXIN_1"/>
    <property type="match status" value="1"/>
</dbReference>
<dbReference type="PROSITE" id="PS50810">
    <property type="entry name" value="FRATAXIN_2"/>
    <property type="match status" value="1"/>
</dbReference>
<reference evidence="6" key="1">
    <citation type="submission" date="2011-10" db="EMBL/GenBank/DDBJ databases">
        <title>Biochemical characterization of LdFr and LdIsd11 proteins and their interaction.</title>
        <authorList>
            <person name="Ali V."/>
            <person name="Zaidi A."/>
            <person name="Singh K.P."/>
            <person name="Das P."/>
        </authorList>
    </citation>
    <scope>NUCLEOTIDE SEQUENCE [MRNA]</scope>
    <source>
        <strain evidence="6">Ag83</strain>
    </source>
</reference>
<reference evidence="7" key="2">
    <citation type="submission" date="2020-06" db="EMBL/GenBank/DDBJ databases">
        <authorList>
            <person name="Camacho E."/>
            <person name="Gonzalez-de la Fuente S."/>
            <person name="Rastrojo A."/>
            <person name="Peiro-Pastor R."/>
            <person name="Solana J.C."/>
            <person name="Tabera L."/>
            <person name="Gamarro F."/>
            <person name="Carrasco-Ramiro F."/>
            <person name="Requena J.M."/>
            <person name="Aguado B."/>
        </authorList>
    </citation>
    <scope>NUCLEOTIDE SEQUENCE [GENOMIC DNA]</scope>
</reference>
<reference evidence="9" key="3">
    <citation type="journal article" date="2011" name="Genome Res.">
        <title>Whole genome sequencing of multiple Leishmania donovani clinical isolates provides insights into population structure and mechanisms of drug resistance.</title>
        <authorList>
            <person name="Downing T."/>
            <person name="Imamura H."/>
            <person name="Decuypere S."/>
            <person name="Clark T.G."/>
            <person name="Coombs G.H."/>
            <person name="Cotton J.A."/>
            <person name="Hilley J.D."/>
            <person name="de Doncker S."/>
            <person name="Maes I."/>
            <person name="Mottram J.C."/>
            <person name="Quail M.A."/>
            <person name="Rijal S."/>
            <person name="Sanders M."/>
            <person name="Schoenian G."/>
            <person name="Stark O."/>
            <person name="Sundar S."/>
            <person name="Vanaerschot M."/>
            <person name="Hertz-Fowler C."/>
            <person name="Dujardin J.-C."/>
            <person name="Berriman M."/>
        </authorList>
    </citation>
    <scope>NUCLEOTIDE SEQUENCE [LARGE SCALE GENOMIC DNA]</scope>
    <source>
        <strain evidence="9">BPK282A1</strain>
    </source>
</reference>
<reference evidence="10" key="4">
    <citation type="journal article" date="2018" name="Sci. Rep.">
        <title>A complete Leishmania donovani reference genome identifies novel genetic variations associated with virulence.</title>
        <authorList>
            <person name="Lypaczewski P."/>
            <person name="Hoshizaki J."/>
            <person name="Zhang W.-W."/>
            <person name="McCall L.-I."/>
            <person name="Torcivia-Rodriguez J."/>
            <person name="Simonyan V."/>
            <person name="Kaur A."/>
            <person name="Dewar K."/>
            <person name="Matlashewski G."/>
        </authorList>
    </citation>
    <scope>NUCLEOTIDE SEQUENCE [LARGE SCALE GENOMIC DNA]</scope>
    <source>
        <strain evidence="10">LdCL</strain>
    </source>
</reference>
<reference evidence="11" key="5">
    <citation type="submission" date="2019-02" db="EMBL/GenBank/DDBJ databases">
        <title>FDA dAtabase for Regulatory Grade micrObial Sequences (FDA-ARGOS): Supporting development and validation of Infectious Disease Dx tests.</title>
        <authorList>
            <person name="Duncan R."/>
            <person name="Fisher C."/>
            <person name="Tallon L."/>
            <person name="Sadzewicz L."/>
            <person name="Sengamalay N."/>
            <person name="Ott S."/>
            <person name="Godinez A."/>
            <person name="Nagaraj S."/>
            <person name="Vavikolanu K."/>
            <person name="Nadendla S."/>
            <person name="Aluvathingal J."/>
            <person name="Sichtig H."/>
        </authorList>
    </citation>
    <scope>NUCLEOTIDE SEQUENCE [LARGE SCALE GENOMIC DNA]</scope>
    <source>
        <strain evidence="11">FDAARGOS_361</strain>
    </source>
</reference>
<reference key="6">
    <citation type="submission" date="2019-02" db="EMBL/GenBank/DDBJ databases">
        <title>FDA dAtabase for Regulatory Grade micrObial Sequences (FDA-ARGOS): Supporting development and validation of Infectious Disease Dx tests.</title>
        <authorList>
            <person name="Duncan R."/>
            <person name="Fisher C."/>
            <person name="Tallon L."/>
            <person name="Sadzewicz L."/>
            <person name="Sengamalay N."/>
            <person name="Ott S."/>
            <person name="Godinez A."/>
            <person name="Nagaraj S."/>
            <person name="Vavikolanu K."/>
            <person name="Vyas G."/>
            <person name="Nadendla S."/>
            <person name="Aluvathingal J."/>
            <person name="Sichtig H."/>
        </authorList>
    </citation>
    <scope>NUCLEOTIDE SEQUENCE [LARGE SCALE GENOMIC DNA]</scope>
    <source>
        <strain>FDAARGOS_360</strain>
    </source>
</reference>
<reference evidence="5" key="7">
    <citation type="journal article" date="2015" name="Biochimie">
        <title>Interaction of frataxin, an iron binding protein, with IscU of Fe-S clusters biogenesis pathway and its upregulation in AmpB resistant Leishmania donovani.</title>
        <authorList>
            <person name="Zaidi A."/>
            <person name="Singh K.P."/>
            <person name="Anwar S."/>
            <person name="Suman S.S."/>
            <person name="Equbal A."/>
            <person name="Singh K."/>
            <person name="Dikhit M.R."/>
            <person name="Bimal S."/>
            <person name="Pandey K."/>
            <person name="Das P."/>
            <person name="Ali V."/>
        </authorList>
    </citation>
    <scope>FUNCTION</scope>
    <scope>INTERACTION WITH ISCU</scope>
    <scope>SUBCELLULAR LOCATION</scope>
    <scope>DEVELOPMENTAL STAGE</scope>
    <source>
        <strain evidence="4">Ag83</strain>
    </source>
</reference>
<comment type="function">
    <text evidence="3">Iron-binding protein which binds 2 iron atoms per monomer (PubMed:26032732). Probably, acts as an iron carrier for the biosynthesis of Fe-S clusters (PubMed:26032732). Stimulates the cysteine desulphurase activity of IscS in the presence of IscU (PubMed:26032732).</text>
</comment>
<comment type="catalytic activity">
    <reaction evidence="1">
        <text>4 Fe(2+) + O2 + 4 H(+) = 4 Fe(3+) + 2 H2O</text>
        <dbReference type="Rhea" id="RHEA:11148"/>
        <dbReference type="ChEBI" id="CHEBI:15377"/>
        <dbReference type="ChEBI" id="CHEBI:15378"/>
        <dbReference type="ChEBI" id="CHEBI:15379"/>
        <dbReference type="ChEBI" id="CHEBI:29033"/>
        <dbReference type="ChEBI" id="CHEBI:29034"/>
        <dbReference type="EC" id="1.16.3.1"/>
    </reaction>
</comment>
<comment type="subunit">
    <text evidence="3">Interacts with IscU; the interaction is direct.</text>
</comment>
<comment type="subcellular location">
    <subcellularLocation>
        <location evidence="3">Mitochondrion</location>
    </subcellularLocation>
</comment>
<comment type="developmental stage">
    <text evidence="3">Expressed in promastigotes (at protein level).</text>
</comment>
<comment type="miscellaneous">
    <text evidence="3">Frataxin protein levels are up-regulated in ampicillin-resistant strains.</text>
</comment>
<comment type="similarity">
    <text evidence="5">Belongs to the frataxin family.</text>
</comment>
<keyword id="KW-0406">Ion transport</keyword>
<keyword id="KW-0408">Iron</keyword>
<keyword id="KW-0409">Iron storage</keyword>
<keyword id="KW-0410">Iron transport</keyword>
<keyword id="KW-0496">Mitochondrion</keyword>
<keyword id="KW-0560">Oxidoreductase</keyword>
<keyword id="KW-0809">Transit peptide</keyword>
<keyword id="KW-0813">Transport</keyword>
<proteinExistence type="evidence at protein level"/>
<protein>
    <recommendedName>
        <fullName evidence="4">Frataxin-like protein, mitochondrial</fullName>
        <ecNumber evidence="1">1.16.3.1</ecNumber>
    </recommendedName>
    <alternativeName>
        <fullName evidence="4">Ld-frataxin</fullName>
    </alternativeName>
</protein>
<name>FRDA_LEIDO</name>
<organism>
    <name type="scientific">Leishmania donovani</name>
    <dbReference type="NCBI Taxonomy" id="5661"/>
    <lineage>
        <taxon>Eukaryota</taxon>
        <taxon>Discoba</taxon>
        <taxon>Euglenozoa</taxon>
        <taxon>Kinetoplastea</taxon>
        <taxon>Metakinetoplastina</taxon>
        <taxon>Trypanosomatida</taxon>
        <taxon>Trypanosomatidae</taxon>
        <taxon>Leishmaniinae</taxon>
        <taxon>Leishmania</taxon>
    </lineage>
</organism>
<sequence length="189" mass="20296">MNCARLHQRIPLRAMALTTTSYPALAPSHSFANASTSVMTASAMAVAHRAAATTGASDATTTAQVVHYSKLGMDGFTDIKFNTAADELLELVETKVDALDSAAVEDVSCNGGVLTLETTERGTFILNKQAPNVQLWLSSPISGPHHYDMITVTQDGHEKVSWKSDHDGHDLVKKLEKELTEVLGTAFKL</sequence>
<gene>
    <name evidence="8" type="ORF">LDBPK_251090</name>
</gene>